<evidence type="ECO:0000255" key="1">
    <source>
        <dbReference type="PROSITE-ProRule" id="PRU00723"/>
    </source>
</evidence>
<evidence type="ECO:0000256" key="2">
    <source>
        <dbReference type="SAM" id="MobiDB-lite"/>
    </source>
</evidence>
<reference key="1">
    <citation type="journal article" date="2000" name="DNA Res.">
        <title>Structural analysis of Arabidopsis thaliana chromosome 3. I. Sequence features of the regions of 4,504,864 bp covered by sixty P1 and TAC clones.</title>
        <authorList>
            <person name="Sato S."/>
            <person name="Nakamura Y."/>
            <person name="Kaneko T."/>
            <person name="Katoh T."/>
            <person name="Asamizu E."/>
            <person name="Tabata S."/>
        </authorList>
    </citation>
    <scope>NUCLEOTIDE SEQUENCE [LARGE SCALE GENOMIC DNA]</scope>
    <source>
        <strain>cv. Columbia</strain>
    </source>
</reference>
<reference key="2">
    <citation type="journal article" date="2017" name="Plant J.">
        <title>Araport11: a complete reannotation of the Arabidopsis thaliana reference genome.</title>
        <authorList>
            <person name="Cheng C.Y."/>
            <person name="Krishnakumar V."/>
            <person name="Chan A.P."/>
            <person name="Thibaud-Nissen F."/>
            <person name="Schobel S."/>
            <person name="Town C.D."/>
        </authorList>
    </citation>
    <scope>GENOME REANNOTATION</scope>
    <source>
        <strain>cv. Columbia</strain>
    </source>
</reference>
<reference key="3">
    <citation type="journal article" date="2003" name="Science">
        <title>Empirical analysis of transcriptional activity in the Arabidopsis genome.</title>
        <authorList>
            <person name="Yamada K."/>
            <person name="Lim J."/>
            <person name="Dale J.M."/>
            <person name="Chen H."/>
            <person name="Shinn P."/>
            <person name="Palm C.J."/>
            <person name="Southwick A.M."/>
            <person name="Wu H.C."/>
            <person name="Kim C.J."/>
            <person name="Nguyen M."/>
            <person name="Pham P.K."/>
            <person name="Cheuk R.F."/>
            <person name="Karlin-Newmann G."/>
            <person name="Liu S.X."/>
            <person name="Lam B."/>
            <person name="Sakano H."/>
            <person name="Wu T."/>
            <person name="Yu G."/>
            <person name="Miranda M."/>
            <person name="Quach H.L."/>
            <person name="Tripp M."/>
            <person name="Chang C.H."/>
            <person name="Lee J.M."/>
            <person name="Toriumi M.J."/>
            <person name="Chan M.M."/>
            <person name="Tang C.C."/>
            <person name="Onodera C.S."/>
            <person name="Deng J.M."/>
            <person name="Akiyama K."/>
            <person name="Ansari Y."/>
            <person name="Arakawa T."/>
            <person name="Banh J."/>
            <person name="Banno F."/>
            <person name="Bowser L."/>
            <person name="Brooks S.Y."/>
            <person name="Carninci P."/>
            <person name="Chao Q."/>
            <person name="Choy N."/>
            <person name="Enju A."/>
            <person name="Goldsmith A.D."/>
            <person name="Gurjal M."/>
            <person name="Hansen N.F."/>
            <person name="Hayashizaki Y."/>
            <person name="Johnson-Hopson C."/>
            <person name="Hsuan V.W."/>
            <person name="Iida K."/>
            <person name="Karnes M."/>
            <person name="Khan S."/>
            <person name="Koesema E."/>
            <person name="Ishida J."/>
            <person name="Jiang P.X."/>
            <person name="Jones T."/>
            <person name="Kawai J."/>
            <person name="Kamiya A."/>
            <person name="Meyers C."/>
            <person name="Nakajima M."/>
            <person name="Narusaka M."/>
            <person name="Seki M."/>
            <person name="Sakurai T."/>
            <person name="Satou M."/>
            <person name="Tamse R."/>
            <person name="Vaysberg M."/>
            <person name="Wallender E.K."/>
            <person name="Wong C."/>
            <person name="Yamamura Y."/>
            <person name="Yuan S."/>
            <person name="Shinozaki K."/>
            <person name="Davis R.W."/>
            <person name="Theologis A."/>
            <person name="Ecker J.R."/>
        </authorList>
    </citation>
    <scope>NUCLEOTIDE SEQUENCE [LARGE SCALE MRNA]</scope>
    <source>
        <strain>cv. Columbia</strain>
    </source>
</reference>
<reference key="4">
    <citation type="journal article" date="2008" name="BMC Genomics">
        <title>Genome-wide analysis of CCCH zinc finger family in Arabidopsis and rice.</title>
        <authorList>
            <person name="Wang D."/>
            <person name="Guo Y."/>
            <person name="Wu C."/>
            <person name="Yang G."/>
            <person name="Li Y."/>
            <person name="Zheng C."/>
        </authorList>
    </citation>
    <scope>NOMENCLATURE</scope>
</reference>
<keyword id="KW-0238">DNA-binding</keyword>
<keyword id="KW-0479">Metal-binding</keyword>
<keyword id="KW-1185">Reference proteome</keyword>
<keyword id="KW-0677">Repeat</keyword>
<keyword id="KW-0862">Zinc</keyword>
<keyword id="KW-0863">Zinc-finger</keyword>
<sequence>MDSSYSDSRPMFVQSPYGGWNQTQMIDSMANPMNNEQGDLHSLSESQSQSQPSQQLQPALKRPRLVDDNLFNPASSFPQPSSSNPWMVPSLNPPPVNKGTANIFYKTRMCAKFRAGTCRNGELCNFAHGIEDLRQPPSNWQEIVGPPPAGQDRERERERERERERPSLAPVVNNNWEDDQKIILRMKLCRKFCFGEECPYGDRCNFIHEDLSKFREDSGKLRESSVISVGATAADQPSDTASNLIEVNRQGSIPVPAPMNNGGVVKTVYWKTRLCMKFDITGQCPFGDKCHFAHGQAELHNSVGRVEGEAMNAVASVNKQAVVPANEAFAMKPITQVTADSSGLNEEGRRKKCLLKWSDSKKINRIYGDWIDDLPVGQKSTKPVES</sequence>
<dbReference type="EMBL" id="AB025624">
    <property type="protein sequence ID" value="BAB02460.1"/>
    <property type="molecule type" value="Genomic_DNA"/>
</dbReference>
<dbReference type="EMBL" id="CP002686">
    <property type="protein sequence ID" value="AEE76229.1"/>
    <property type="molecule type" value="Genomic_DNA"/>
</dbReference>
<dbReference type="EMBL" id="CP002686">
    <property type="protein sequence ID" value="ANM65744.1"/>
    <property type="molecule type" value="Genomic_DNA"/>
</dbReference>
<dbReference type="EMBL" id="AY037226">
    <property type="protein sequence ID" value="AAK59826.1"/>
    <property type="molecule type" value="mRNA"/>
</dbReference>
<dbReference type="EMBL" id="AY081745">
    <property type="protein sequence ID" value="AAL87398.1"/>
    <property type="molecule type" value="mRNA"/>
</dbReference>
<dbReference type="RefSeq" id="NP_001327691.1">
    <property type="nucleotide sequence ID" value="NM_001338393.1"/>
</dbReference>
<dbReference type="RefSeq" id="NP_566631.1">
    <property type="nucleotide sequence ID" value="NM_112823.4"/>
</dbReference>
<dbReference type="BioGRID" id="6803">
    <property type="interactions" value="1"/>
</dbReference>
<dbReference type="FunCoup" id="Q9LT81">
    <property type="interactions" value="537"/>
</dbReference>
<dbReference type="IntAct" id="Q9LT81">
    <property type="interactions" value="1"/>
</dbReference>
<dbReference type="STRING" id="3702.Q9LT81"/>
<dbReference type="PaxDb" id="3702-AT3G19360.1"/>
<dbReference type="ProteomicsDB" id="240386"/>
<dbReference type="EnsemblPlants" id="AT3G19360.1">
    <property type="protein sequence ID" value="AT3G19360.1"/>
    <property type="gene ID" value="AT3G19360"/>
</dbReference>
<dbReference type="EnsemblPlants" id="AT3G19360.2">
    <property type="protein sequence ID" value="AT3G19360.2"/>
    <property type="gene ID" value="AT3G19360"/>
</dbReference>
<dbReference type="GeneID" id="821470"/>
<dbReference type="Gramene" id="AT3G19360.1">
    <property type="protein sequence ID" value="AT3G19360.1"/>
    <property type="gene ID" value="AT3G19360"/>
</dbReference>
<dbReference type="Gramene" id="AT3G19360.2">
    <property type="protein sequence ID" value="AT3G19360.2"/>
    <property type="gene ID" value="AT3G19360"/>
</dbReference>
<dbReference type="KEGG" id="ath:AT3G19360"/>
<dbReference type="Araport" id="AT3G19360"/>
<dbReference type="TAIR" id="AT3G19360"/>
<dbReference type="eggNOG" id="KOG1677">
    <property type="taxonomic scope" value="Eukaryota"/>
</dbReference>
<dbReference type="HOGENOM" id="CLU_060653_0_0_1"/>
<dbReference type="InParanoid" id="Q9LT81"/>
<dbReference type="OMA" id="PYGVWNQ"/>
<dbReference type="PhylomeDB" id="Q9LT81"/>
<dbReference type="PRO" id="PR:Q9LT81"/>
<dbReference type="Proteomes" id="UP000006548">
    <property type="component" value="Chromosome 3"/>
</dbReference>
<dbReference type="ExpressionAtlas" id="Q9LT81">
    <property type="expression patterns" value="baseline and differential"/>
</dbReference>
<dbReference type="GO" id="GO:0003677">
    <property type="term" value="F:DNA binding"/>
    <property type="evidence" value="ECO:0007669"/>
    <property type="project" value="UniProtKB-KW"/>
</dbReference>
<dbReference type="GO" id="GO:0003700">
    <property type="term" value="F:DNA-binding transcription factor activity"/>
    <property type="evidence" value="ECO:0000250"/>
    <property type="project" value="TAIR"/>
</dbReference>
<dbReference type="GO" id="GO:0003729">
    <property type="term" value="F:mRNA binding"/>
    <property type="evidence" value="ECO:0007669"/>
    <property type="project" value="InterPro"/>
</dbReference>
<dbReference type="GO" id="GO:0008270">
    <property type="term" value="F:zinc ion binding"/>
    <property type="evidence" value="ECO:0007669"/>
    <property type="project" value="UniProtKB-KW"/>
</dbReference>
<dbReference type="GO" id="GO:0006355">
    <property type="term" value="P:regulation of DNA-templated transcription"/>
    <property type="evidence" value="ECO:0000304"/>
    <property type="project" value="TAIR"/>
</dbReference>
<dbReference type="FunFam" id="4.10.1000.10:FF:000003">
    <property type="entry name" value="Zinc finger CCCH domain-containing protein"/>
    <property type="match status" value="2"/>
</dbReference>
<dbReference type="FunFam" id="4.10.1000.10:FF:000037">
    <property type="entry name" value="Zinc finger CCCH domain-containing protein 39"/>
    <property type="match status" value="1"/>
</dbReference>
<dbReference type="Gene3D" id="4.10.1000.10">
    <property type="entry name" value="Zinc finger, CCCH-type"/>
    <property type="match status" value="3"/>
</dbReference>
<dbReference type="InterPro" id="IPR045877">
    <property type="entry name" value="ZFP36-like"/>
</dbReference>
<dbReference type="InterPro" id="IPR000571">
    <property type="entry name" value="Znf_CCCH"/>
</dbReference>
<dbReference type="InterPro" id="IPR036855">
    <property type="entry name" value="Znf_CCCH_sf"/>
</dbReference>
<dbReference type="PANTHER" id="PTHR12547">
    <property type="entry name" value="CCCH ZINC FINGER/TIS11-RELATED"/>
    <property type="match status" value="1"/>
</dbReference>
<dbReference type="PANTHER" id="PTHR12547:SF18">
    <property type="entry name" value="PROTEIN TIS11"/>
    <property type="match status" value="1"/>
</dbReference>
<dbReference type="Pfam" id="PF00642">
    <property type="entry name" value="zf-CCCH"/>
    <property type="match status" value="1"/>
</dbReference>
<dbReference type="Pfam" id="PF14608">
    <property type="entry name" value="zf-CCCH_2"/>
    <property type="match status" value="1"/>
</dbReference>
<dbReference type="Pfam" id="PF25427">
    <property type="entry name" value="zf-CCCH_UNK"/>
    <property type="match status" value="1"/>
</dbReference>
<dbReference type="SMART" id="SM00356">
    <property type="entry name" value="ZnF_C3H1"/>
    <property type="match status" value="3"/>
</dbReference>
<dbReference type="SUPFAM" id="SSF90229">
    <property type="entry name" value="CCCH zinc finger"/>
    <property type="match status" value="3"/>
</dbReference>
<dbReference type="PROSITE" id="PS50103">
    <property type="entry name" value="ZF_C3H1"/>
    <property type="match status" value="3"/>
</dbReference>
<name>C3H39_ARATH</name>
<accession>Q9LT81</accession>
<proteinExistence type="evidence at transcript level"/>
<gene>
    <name type="ordered locus">At3g19360</name>
    <name type="ORF">MLD14.9</name>
</gene>
<organism>
    <name type="scientific">Arabidopsis thaliana</name>
    <name type="common">Mouse-ear cress</name>
    <dbReference type="NCBI Taxonomy" id="3702"/>
    <lineage>
        <taxon>Eukaryota</taxon>
        <taxon>Viridiplantae</taxon>
        <taxon>Streptophyta</taxon>
        <taxon>Embryophyta</taxon>
        <taxon>Tracheophyta</taxon>
        <taxon>Spermatophyta</taxon>
        <taxon>Magnoliopsida</taxon>
        <taxon>eudicotyledons</taxon>
        <taxon>Gunneridae</taxon>
        <taxon>Pentapetalae</taxon>
        <taxon>rosids</taxon>
        <taxon>malvids</taxon>
        <taxon>Brassicales</taxon>
        <taxon>Brassicaceae</taxon>
        <taxon>Camelineae</taxon>
        <taxon>Arabidopsis</taxon>
    </lineage>
</organism>
<protein>
    <recommendedName>
        <fullName>Zinc finger CCCH domain-containing protein 39</fullName>
        <shortName>AtC3H39</shortName>
    </recommendedName>
</protein>
<feature type="chain" id="PRO_0000371994" description="Zinc finger CCCH domain-containing protein 39">
    <location>
        <begin position="1"/>
        <end position="386"/>
    </location>
</feature>
<feature type="zinc finger region" description="C3H1-type 1" evidence="1">
    <location>
        <begin position="104"/>
        <end position="131"/>
    </location>
</feature>
<feature type="zinc finger region" description="C3H1-type 2" evidence="1">
    <location>
        <begin position="183"/>
        <end position="211"/>
    </location>
</feature>
<feature type="zinc finger region" description="C3H1-type 3" evidence="1">
    <location>
        <begin position="269"/>
        <end position="297"/>
    </location>
</feature>
<feature type="region of interest" description="Disordered" evidence="2">
    <location>
        <begin position="1"/>
        <end position="90"/>
    </location>
</feature>
<feature type="region of interest" description="Disordered" evidence="2">
    <location>
        <begin position="136"/>
        <end position="166"/>
    </location>
</feature>
<feature type="compositionally biased region" description="Polar residues" evidence="2">
    <location>
        <begin position="20"/>
        <end position="37"/>
    </location>
</feature>
<feature type="compositionally biased region" description="Low complexity" evidence="2">
    <location>
        <begin position="43"/>
        <end position="58"/>
    </location>
</feature>
<feature type="compositionally biased region" description="Polar residues" evidence="2">
    <location>
        <begin position="72"/>
        <end position="85"/>
    </location>
</feature>
<feature type="compositionally biased region" description="Basic and acidic residues" evidence="2">
    <location>
        <begin position="151"/>
        <end position="166"/>
    </location>
</feature>